<name>CPIN1_RAT</name>
<keyword id="KW-0001">2Fe-2S</keyword>
<keyword id="KW-0004">4Fe-4S</keyword>
<keyword id="KW-0053">Apoptosis</keyword>
<keyword id="KW-0963">Cytoplasm</keyword>
<keyword id="KW-0408">Iron</keyword>
<keyword id="KW-0411">Iron-sulfur</keyword>
<keyword id="KW-0479">Metal-binding</keyword>
<keyword id="KW-0496">Mitochondrion</keyword>
<keyword id="KW-0539">Nucleus</keyword>
<keyword id="KW-0597">Phosphoprotein</keyword>
<keyword id="KW-1185">Reference proteome</keyword>
<reference key="1">
    <citation type="journal article" date="2004" name="Genome Res.">
        <title>The status, quality, and expansion of the NIH full-length cDNA project: the Mammalian Gene Collection (MGC).</title>
        <authorList>
            <consortium name="The MGC Project Team"/>
        </authorList>
    </citation>
    <scope>NUCLEOTIDE SEQUENCE [LARGE SCALE MRNA]</scope>
    <source>
        <tissue>Heart</tissue>
    </source>
</reference>
<reference key="2">
    <citation type="journal article" date="2012" name="Nat. Commun.">
        <title>Quantitative maps of protein phosphorylation sites across 14 different rat organs and tissues.</title>
        <authorList>
            <person name="Lundby A."/>
            <person name="Secher A."/>
            <person name="Lage K."/>
            <person name="Nordsborg N.B."/>
            <person name="Dmytriyev A."/>
            <person name="Lundby C."/>
            <person name="Olsen J.V."/>
        </authorList>
    </citation>
    <scope>PHOSPHORYLATION [LARGE SCALE ANALYSIS] AT SER-213</scope>
    <scope>IDENTIFICATION BY MASS SPECTROMETRY [LARGE SCALE ANALYSIS]</scope>
</reference>
<feature type="chain" id="PRO_0000392300" description="Anamorsin">
    <location>
        <begin position="1"/>
        <end position="309"/>
    </location>
</feature>
<feature type="region of interest" description="N-terminal SAM-like domain" evidence="3">
    <location>
        <begin position="6"/>
        <end position="172"/>
    </location>
</feature>
<feature type="region of interest" description="Linker" evidence="3">
    <location>
        <begin position="173"/>
        <end position="222"/>
    </location>
</feature>
<feature type="region of interest" description="Fe-S binding site A" evidence="3">
    <location>
        <begin position="235"/>
        <end position="249"/>
    </location>
</feature>
<feature type="region of interest" description="Fe-S binding site B" evidence="3">
    <location>
        <begin position="271"/>
        <end position="285"/>
    </location>
</feature>
<feature type="short sequence motif" description="Cx2C motif 1" evidence="3">
    <location>
        <begin position="271"/>
        <end position="274"/>
    </location>
</feature>
<feature type="short sequence motif" description="Cx2C motif 2" evidence="3">
    <location>
        <begin position="282"/>
        <end position="285"/>
    </location>
</feature>
<feature type="binding site" evidence="3">
    <location>
        <position position="235"/>
    </location>
    <ligand>
        <name>[2Fe-2S] cluster</name>
        <dbReference type="ChEBI" id="CHEBI:190135"/>
    </ligand>
</feature>
<feature type="binding site" evidence="3">
    <location>
        <position position="244"/>
    </location>
    <ligand>
        <name>[2Fe-2S] cluster</name>
        <dbReference type="ChEBI" id="CHEBI:190135"/>
    </ligand>
</feature>
<feature type="binding site" evidence="3">
    <location>
        <position position="247"/>
    </location>
    <ligand>
        <name>[2Fe-2S] cluster</name>
        <dbReference type="ChEBI" id="CHEBI:190135"/>
    </ligand>
</feature>
<feature type="binding site" evidence="3">
    <location>
        <position position="249"/>
    </location>
    <ligand>
        <name>[2Fe-2S] cluster</name>
        <dbReference type="ChEBI" id="CHEBI:190135"/>
    </ligand>
</feature>
<feature type="binding site" evidence="3">
    <location>
        <position position="271"/>
    </location>
    <ligand>
        <name>[4Fe-4S] cluster</name>
        <dbReference type="ChEBI" id="CHEBI:49883"/>
    </ligand>
</feature>
<feature type="binding site" evidence="3">
    <location>
        <position position="274"/>
    </location>
    <ligand>
        <name>[4Fe-4S] cluster</name>
        <dbReference type="ChEBI" id="CHEBI:49883"/>
    </ligand>
</feature>
<feature type="binding site" evidence="3">
    <location>
        <position position="282"/>
    </location>
    <ligand>
        <name>[4Fe-4S] cluster</name>
        <dbReference type="ChEBI" id="CHEBI:49883"/>
    </ligand>
</feature>
<feature type="binding site" evidence="3">
    <location>
        <position position="285"/>
    </location>
    <ligand>
        <name>[4Fe-4S] cluster</name>
        <dbReference type="ChEBI" id="CHEBI:49883"/>
    </ligand>
</feature>
<feature type="modified residue" description="Phosphoserine" evidence="1">
    <location>
        <position position="182"/>
    </location>
</feature>
<feature type="modified residue" description="Phosphoserine" evidence="1">
    <location>
        <position position="183"/>
    </location>
</feature>
<feature type="modified residue" description="Phosphoserine" evidence="4">
    <location>
        <position position="213"/>
    </location>
</feature>
<feature type="modified residue" description="Phosphoserine" evidence="2">
    <location>
        <position position="269"/>
    </location>
</feature>
<feature type="modified residue" description="Phosphoserine" evidence="1">
    <location>
        <position position="302"/>
    </location>
</feature>
<feature type="modified residue" description="Phosphoserine" evidence="1">
    <location>
        <position position="304"/>
    </location>
</feature>
<comment type="function">
    <text evidence="3">Component of the cytosolic iron-sulfur (Fe-S) protein assembly (CIA) machinery required for the maturation of extramitochondrial Fe-S proteins. Part of an electron transfer chain functioning in an early step of cytosolic Fe-S biogenesis, facilitating the de novo assembly of a [4Fe-4S] cluster on the scaffold complex NUBP1-NUBP2. Electrons are transferred to CIAPIN1 from NADPH via the FAD- and FMN-containing protein NDOR1. NDOR1-CIAPIN1 are also required for the assembly of the diferric tyrosyl radical cofactor of ribonucleotide reductase (RNR), probably by providing electrons for reduction during radical cofactor maturation in the catalytic small subunit. Has anti-apoptotic effects in the cell. Involved in negative control of cell death upon cytokine withdrawal. Promotes development of hematopoietic cells.</text>
</comment>
<comment type="cofactor">
    <cofactor evidence="3">
        <name>[2Fe-2S] cluster</name>
        <dbReference type="ChEBI" id="CHEBI:190135"/>
    </cofactor>
</comment>
<comment type="cofactor">
    <cofactor evidence="3">
        <name>[4Fe-4S] cluster</name>
        <dbReference type="ChEBI" id="CHEBI:49883"/>
    </cofactor>
</comment>
<comment type="subunit">
    <text evidence="3">Monomer. Interacts with NDOR1. Interacts with CHCHD4.</text>
</comment>
<comment type="subcellular location">
    <subcellularLocation>
        <location evidence="3">Cytoplasm</location>
    </subcellularLocation>
    <subcellularLocation>
        <location evidence="3">Nucleus</location>
    </subcellularLocation>
    <subcellularLocation>
        <location evidence="3">Mitochondrion intermembrane space</location>
    </subcellularLocation>
</comment>
<comment type="domain">
    <text evidence="3">The twin Cx2C motifs are involved in the recognition by the mitochondrial CHCHD4/MIA40-GFER/ERV1 disulfide relay system. The formation of 2 disulfide bonds in the Cx2C motifs through dithiol/disulfide exchange reactions effectively traps the protein in the mitochondrial intermembrane space.</text>
</comment>
<comment type="domain">
    <text evidence="3">The C-terminal domain binds 2 Fe-S clusters but is otherwise mostly in an intrinsically disordered conformation.</text>
</comment>
<comment type="domain">
    <text evidence="3">The N-terminal domain has structural similarity with S-adenosyl-L-methionine-dependent methyltransferases, but does not bind S-adenosyl-L-methionine. It is required for correct assembly of the 2 Fe-S clusters.</text>
</comment>
<comment type="similarity">
    <text evidence="3">Belongs to the anamorsin family.</text>
</comment>
<gene>
    <name evidence="3" type="primary">Ciapin1</name>
</gene>
<proteinExistence type="evidence at protein level"/>
<sequence length="309" mass="33042">MAEFGISPGQLVAVFCDKSSSEEALKKLVGRVQGLTGSEGQVFVENITQLLQSAHKESSFDVILSGIVPGSTSLHSPEALADMARILRPGGCLFLKEPVETTGVNNDKIKTASKLCSALTLSGLVEIKELQREALSPEEAQSMQEHLGYHSDSLLSVHVTGKKPNFEVGSSSQLKLLHKKSSSVKPVVDPATAKLWTLSANDMEDDSMDLIDSDELLDPEDLKKPDPASLKAPSCGEGKKRKACKNCTCGLAEELEKEQSKAQSSQPKSACGNCYLGDAFRCANCPYLGMPAFKPGEQVLLSSSNLQDA</sequence>
<dbReference type="EMBL" id="BC083753">
    <property type="protein sequence ID" value="AAH83753.1"/>
    <property type="molecule type" value="mRNA"/>
</dbReference>
<dbReference type="RefSeq" id="NP_001007690.1">
    <property type="nucleotide sequence ID" value="NM_001007689.1"/>
</dbReference>
<dbReference type="RefSeq" id="XP_006255168.1">
    <property type="nucleotide sequence ID" value="XM_006255106.5"/>
</dbReference>
<dbReference type="RefSeq" id="XP_006255169.1">
    <property type="nucleotide sequence ID" value="XM_006255107.5"/>
</dbReference>
<dbReference type="RefSeq" id="XP_006255170.1">
    <property type="nucleotide sequence ID" value="XM_006255108.5"/>
</dbReference>
<dbReference type="RefSeq" id="XP_038953638.1">
    <property type="nucleotide sequence ID" value="XM_039097710.2"/>
</dbReference>
<dbReference type="RefSeq" id="XP_063134060.1">
    <property type="nucleotide sequence ID" value="XM_063277990.1"/>
</dbReference>
<dbReference type="SMR" id="Q5XID1"/>
<dbReference type="FunCoup" id="Q5XID1">
    <property type="interactions" value="3798"/>
</dbReference>
<dbReference type="IntAct" id="Q5XID1">
    <property type="interactions" value="1"/>
</dbReference>
<dbReference type="STRING" id="10116.ENSRNOP00000021769"/>
<dbReference type="iPTMnet" id="Q5XID1"/>
<dbReference type="PhosphoSitePlus" id="Q5XID1"/>
<dbReference type="jPOST" id="Q5XID1"/>
<dbReference type="PaxDb" id="10116-ENSRNOP00000021769"/>
<dbReference type="Ensembl" id="ENSRNOT00000021769.6">
    <property type="protein sequence ID" value="ENSRNOP00000021769.3"/>
    <property type="gene ID" value="ENSRNOG00000016234.6"/>
</dbReference>
<dbReference type="GeneID" id="307649"/>
<dbReference type="KEGG" id="rno:307649"/>
<dbReference type="UCSC" id="RGD:1549737">
    <property type="organism name" value="rat"/>
</dbReference>
<dbReference type="AGR" id="RGD:1549737"/>
<dbReference type="CTD" id="57019"/>
<dbReference type="RGD" id="1549737">
    <property type="gene designation" value="Ciapin1"/>
</dbReference>
<dbReference type="eggNOG" id="KOG4020">
    <property type="taxonomic scope" value="Eukaryota"/>
</dbReference>
<dbReference type="GeneTree" id="ENSGT00390000011417"/>
<dbReference type="HOGENOM" id="CLU_064393_2_0_1"/>
<dbReference type="InParanoid" id="Q5XID1"/>
<dbReference type="PhylomeDB" id="Q5XID1"/>
<dbReference type="TreeFam" id="TF314449"/>
<dbReference type="PRO" id="PR:Q5XID1"/>
<dbReference type="Proteomes" id="UP000002494">
    <property type="component" value="Chromosome 19"/>
</dbReference>
<dbReference type="Bgee" id="ENSRNOG00000016234">
    <property type="expression patterns" value="Expressed in adult mammalian kidney and 19 other cell types or tissues"/>
</dbReference>
<dbReference type="GO" id="GO:0005737">
    <property type="term" value="C:cytoplasm"/>
    <property type="evidence" value="ECO:0000266"/>
    <property type="project" value="RGD"/>
</dbReference>
<dbReference type="GO" id="GO:0005758">
    <property type="term" value="C:mitochondrial intermembrane space"/>
    <property type="evidence" value="ECO:0007669"/>
    <property type="project" value="UniProtKB-SubCell"/>
</dbReference>
<dbReference type="GO" id="GO:0005730">
    <property type="term" value="C:nucleolus"/>
    <property type="evidence" value="ECO:0000266"/>
    <property type="project" value="RGD"/>
</dbReference>
<dbReference type="GO" id="GO:0051537">
    <property type="term" value="F:2 iron, 2 sulfur cluster binding"/>
    <property type="evidence" value="ECO:0000250"/>
    <property type="project" value="UniProtKB"/>
</dbReference>
<dbReference type="GO" id="GO:0051539">
    <property type="term" value="F:4 iron, 4 sulfur cluster binding"/>
    <property type="evidence" value="ECO:0007669"/>
    <property type="project" value="UniProtKB-KW"/>
</dbReference>
<dbReference type="GO" id="GO:0009055">
    <property type="term" value="F:electron transfer activity"/>
    <property type="evidence" value="ECO:0007669"/>
    <property type="project" value="UniProtKB-UniRule"/>
</dbReference>
<dbReference type="GO" id="GO:0005506">
    <property type="term" value="F:iron ion binding"/>
    <property type="evidence" value="ECO:0000266"/>
    <property type="project" value="RGD"/>
</dbReference>
<dbReference type="GO" id="GO:0006915">
    <property type="term" value="P:apoptotic process"/>
    <property type="evidence" value="ECO:0007669"/>
    <property type="project" value="UniProtKB-KW"/>
</dbReference>
<dbReference type="GO" id="GO:0030097">
    <property type="term" value="P:hemopoiesis"/>
    <property type="evidence" value="ECO:0000266"/>
    <property type="project" value="RGD"/>
</dbReference>
<dbReference type="GO" id="GO:0016226">
    <property type="term" value="P:iron-sulfur cluster assembly"/>
    <property type="evidence" value="ECO:0000318"/>
    <property type="project" value="GO_Central"/>
</dbReference>
<dbReference type="GO" id="GO:0043066">
    <property type="term" value="P:negative regulation of apoptotic process"/>
    <property type="evidence" value="ECO:0000266"/>
    <property type="project" value="RGD"/>
</dbReference>
<dbReference type="CDD" id="cd02440">
    <property type="entry name" value="AdoMet_MTases"/>
    <property type="match status" value="1"/>
</dbReference>
<dbReference type="FunFam" id="3.40.50.150:FF:000658">
    <property type="entry name" value="Anamorsin"/>
    <property type="match status" value="1"/>
</dbReference>
<dbReference type="Gene3D" id="3.40.50.150">
    <property type="entry name" value="Vaccinia Virus protein VP39"/>
    <property type="match status" value="1"/>
</dbReference>
<dbReference type="HAMAP" id="MF_03115">
    <property type="entry name" value="Anamorsin"/>
    <property type="match status" value="1"/>
</dbReference>
<dbReference type="InterPro" id="IPR007785">
    <property type="entry name" value="Anamorsin"/>
</dbReference>
<dbReference type="InterPro" id="IPR049011">
    <property type="entry name" value="Anamorsin_N_metazoan"/>
</dbReference>
<dbReference type="InterPro" id="IPR046408">
    <property type="entry name" value="CIAPIN1"/>
</dbReference>
<dbReference type="InterPro" id="IPR029063">
    <property type="entry name" value="SAM-dependent_MTases_sf"/>
</dbReference>
<dbReference type="PANTHER" id="PTHR13273">
    <property type="entry name" value="ANAMORSIN"/>
    <property type="match status" value="1"/>
</dbReference>
<dbReference type="PANTHER" id="PTHR13273:SF14">
    <property type="entry name" value="ANAMORSIN"/>
    <property type="match status" value="1"/>
</dbReference>
<dbReference type="Pfam" id="PF20922">
    <property type="entry name" value="Anamorsin_N"/>
    <property type="match status" value="1"/>
</dbReference>
<dbReference type="Pfam" id="PF05093">
    <property type="entry name" value="CIAPIN1"/>
    <property type="match status" value="2"/>
</dbReference>
<dbReference type="SUPFAM" id="SSF53335">
    <property type="entry name" value="S-adenosyl-L-methionine-dependent methyltransferases"/>
    <property type="match status" value="1"/>
</dbReference>
<evidence type="ECO:0000250" key="1">
    <source>
        <dbReference type="UniProtKB" id="Q6FI81"/>
    </source>
</evidence>
<evidence type="ECO:0000250" key="2">
    <source>
        <dbReference type="UniProtKB" id="Q8WTY4"/>
    </source>
</evidence>
<evidence type="ECO:0000255" key="3">
    <source>
        <dbReference type="HAMAP-Rule" id="MF_03115"/>
    </source>
</evidence>
<evidence type="ECO:0007744" key="4">
    <source>
    </source>
</evidence>
<organism>
    <name type="scientific">Rattus norvegicus</name>
    <name type="common">Rat</name>
    <dbReference type="NCBI Taxonomy" id="10116"/>
    <lineage>
        <taxon>Eukaryota</taxon>
        <taxon>Metazoa</taxon>
        <taxon>Chordata</taxon>
        <taxon>Craniata</taxon>
        <taxon>Vertebrata</taxon>
        <taxon>Euteleostomi</taxon>
        <taxon>Mammalia</taxon>
        <taxon>Eutheria</taxon>
        <taxon>Euarchontoglires</taxon>
        <taxon>Glires</taxon>
        <taxon>Rodentia</taxon>
        <taxon>Myomorpha</taxon>
        <taxon>Muroidea</taxon>
        <taxon>Muridae</taxon>
        <taxon>Murinae</taxon>
        <taxon>Rattus</taxon>
    </lineage>
</organism>
<protein>
    <recommendedName>
        <fullName evidence="3">Anamorsin</fullName>
    </recommendedName>
    <alternativeName>
        <fullName evidence="3">Cytokine-induced apoptosis inhibitor 1</fullName>
    </alternativeName>
    <alternativeName>
        <fullName evidence="3">Fe-S cluster assembly protein DRE2 homolog</fullName>
    </alternativeName>
</protein>
<accession>Q5XID1</accession>